<comment type="similarity">
    <text evidence="1">Belongs to the bacterial ribosomal protein bS21 family.</text>
</comment>
<organism>
    <name type="scientific">Actinobacillus succinogenes (strain ATCC 55618 / DSM 22257 / CCUG 43843 / 130Z)</name>
    <dbReference type="NCBI Taxonomy" id="339671"/>
    <lineage>
        <taxon>Bacteria</taxon>
        <taxon>Pseudomonadati</taxon>
        <taxon>Pseudomonadota</taxon>
        <taxon>Gammaproteobacteria</taxon>
        <taxon>Pasteurellales</taxon>
        <taxon>Pasteurellaceae</taxon>
        <taxon>Actinobacillus</taxon>
    </lineage>
</organism>
<evidence type="ECO:0000255" key="1">
    <source>
        <dbReference type="HAMAP-Rule" id="MF_00358"/>
    </source>
</evidence>
<evidence type="ECO:0000256" key="2">
    <source>
        <dbReference type="SAM" id="MobiDB-lite"/>
    </source>
</evidence>
<evidence type="ECO:0000305" key="3"/>
<dbReference type="EMBL" id="CP000746">
    <property type="protein sequence ID" value="ABR74093.1"/>
    <property type="molecule type" value="Genomic_DNA"/>
</dbReference>
<dbReference type="RefSeq" id="WP_005701713.1">
    <property type="nucleotide sequence ID" value="NC_009655.1"/>
</dbReference>
<dbReference type="SMR" id="A6VM96"/>
<dbReference type="STRING" id="339671.Asuc_0721"/>
<dbReference type="GeneID" id="93226412"/>
<dbReference type="KEGG" id="asu:Asuc_0721"/>
<dbReference type="eggNOG" id="COG0828">
    <property type="taxonomic scope" value="Bacteria"/>
</dbReference>
<dbReference type="HOGENOM" id="CLU_159258_1_0_6"/>
<dbReference type="OrthoDB" id="9799244at2"/>
<dbReference type="Proteomes" id="UP000001114">
    <property type="component" value="Chromosome"/>
</dbReference>
<dbReference type="GO" id="GO:1990904">
    <property type="term" value="C:ribonucleoprotein complex"/>
    <property type="evidence" value="ECO:0007669"/>
    <property type="project" value="UniProtKB-KW"/>
</dbReference>
<dbReference type="GO" id="GO:0005840">
    <property type="term" value="C:ribosome"/>
    <property type="evidence" value="ECO:0007669"/>
    <property type="project" value="UniProtKB-KW"/>
</dbReference>
<dbReference type="GO" id="GO:0003735">
    <property type="term" value="F:structural constituent of ribosome"/>
    <property type="evidence" value="ECO:0007669"/>
    <property type="project" value="InterPro"/>
</dbReference>
<dbReference type="GO" id="GO:0006412">
    <property type="term" value="P:translation"/>
    <property type="evidence" value="ECO:0007669"/>
    <property type="project" value="UniProtKB-UniRule"/>
</dbReference>
<dbReference type="Gene3D" id="1.20.5.1150">
    <property type="entry name" value="Ribosomal protein S8"/>
    <property type="match status" value="1"/>
</dbReference>
<dbReference type="HAMAP" id="MF_00358">
    <property type="entry name" value="Ribosomal_bS21"/>
    <property type="match status" value="1"/>
</dbReference>
<dbReference type="InterPro" id="IPR001911">
    <property type="entry name" value="Ribosomal_bS21"/>
</dbReference>
<dbReference type="InterPro" id="IPR018278">
    <property type="entry name" value="Ribosomal_bS21_CS"/>
</dbReference>
<dbReference type="InterPro" id="IPR038380">
    <property type="entry name" value="Ribosomal_bS21_sf"/>
</dbReference>
<dbReference type="NCBIfam" id="TIGR00030">
    <property type="entry name" value="S21p"/>
    <property type="match status" value="1"/>
</dbReference>
<dbReference type="PANTHER" id="PTHR21109">
    <property type="entry name" value="MITOCHONDRIAL 28S RIBOSOMAL PROTEIN S21"/>
    <property type="match status" value="1"/>
</dbReference>
<dbReference type="PANTHER" id="PTHR21109:SF22">
    <property type="entry name" value="SMALL RIBOSOMAL SUBUNIT PROTEIN BS21"/>
    <property type="match status" value="1"/>
</dbReference>
<dbReference type="Pfam" id="PF01165">
    <property type="entry name" value="Ribosomal_S21"/>
    <property type="match status" value="1"/>
</dbReference>
<dbReference type="PRINTS" id="PR00976">
    <property type="entry name" value="RIBOSOMALS21"/>
</dbReference>
<dbReference type="PROSITE" id="PS01181">
    <property type="entry name" value="RIBOSOMAL_S21"/>
    <property type="match status" value="1"/>
</dbReference>
<protein>
    <recommendedName>
        <fullName evidence="1">Small ribosomal subunit protein bS21</fullName>
    </recommendedName>
    <alternativeName>
        <fullName evidence="3">30S ribosomal protein S21</fullName>
    </alternativeName>
</protein>
<sequence length="71" mass="8490">MPVIKVRENESFDVALRRFKRSCEKAGILAEVRAREFYEKPTTIRKRENATRAKRHAKRVARENARNTRLY</sequence>
<keyword id="KW-1185">Reference proteome</keyword>
<keyword id="KW-0687">Ribonucleoprotein</keyword>
<keyword id="KW-0689">Ribosomal protein</keyword>
<proteinExistence type="inferred from homology"/>
<name>RS21_ACTSZ</name>
<reference key="1">
    <citation type="journal article" date="2010" name="BMC Genomics">
        <title>A genomic perspective on the potential of Actinobacillus succinogenes for industrial succinate production.</title>
        <authorList>
            <person name="McKinlay J.B."/>
            <person name="Laivenieks M."/>
            <person name="Schindler B.D."/>
            <person name="McKinlay A.A."/>
            <person name="Siddaramappa S."/>
            <person name="Challacombe J.F."/>
            <person name="Lowry S.R."/>
            <person name="Clum A."/>
            <person name="Lapidus A.L."/>
            <person name="Burkhart K.B."/>
            <person name="Harkins V."/>
            <person name="Vieille C."/>
        </authorList>
    </citation>
    <scope>NUCLEOTIDE SEQUENCE [LARGE SCALE GENOMIC DNA]</scope>
    <source>
        <strain>ATCC 55618 / DSM 22257 / CCUG 43843 / 130Z</strain>
    </source>
</reference>
<accession>A6VM96</accession>
<gene>
    <name evidence="1" type="primary">rpsU</name>
    <name type="ordered locus">Asuc_0721</name>
</gene>
<feature type="chain" id="PRO_1000072075" description="Small ribosomal subunit protein bS21">
    <location>
        <begin position="1"/>
        <end position="71"/>
    </location>
</feature>
<feature type="region of interest" description="Disordered" evidence="2">
    <location>
        <begin position="47"/>
        <end position="71"/>
    </location>
</feature>
<feature type="compositionally biased region" description="Basic and acidic residues" evidence="2">
    <location>
        <begin position="60"/>
        <end position="71"/>
    </location>
</feature>